<dbReference type="EMBL" id="M10060">
    <property type="protein sequence ID" value="AAB59886.1"/>
    <property type="molecule type" value="Genomic_DNA"/>
</dbReference>
<dbReference type="EMBL" id="AF412314">
    <property type="protein sequence ID" value="AAL30505.1"/>
    <property type="molecule type" value="Genomic_DNA"/>
</dbReference>
<dbReference type="RefSeq" id="NP_041004.1">
    <property type="nucleotide sequence ID" value="NC_001488.1"/>
</dbReference>
<dbReference type="IntAct" id="Q85601">
    <property type="interactions" value="7"/>
</dbReference>
<dbReference type="MINT" id="Q85601"/>
<dbReference type="iPTMnet" id="Q85601"/>
<dbReference type="GeneID" id="1491945"/>
<dbReference type="KEGG" id="vg:1491945"/>
<dbReference type="OrthoDB" id="28183at10239"/>
<dbReference type="Proteomes" id="UP000009254">
    <property type="component" value="Genome"/>
</dbReference>
<dbReference type="Proteomes" id="UP000174344">
    <property type="component" value="Genome"/>
</dbReference>
<dbReference type="GO" id="GO:0030430">
    <property type="term" value="C:host cell cytoplasm"/>
    <property type="evidence" value="ECO:0007669"/>
    <property type="project" value="UniProtKB-SubCell"/>
</dbReference>
<dbReference type="GO" id="GO:0044196">
    <property type="term" value="C:host cell nucleolus"/>
    <property type="evidence" value="ECO:0007669"/>
    <property type="project" value="UniProtKB-SubCell"/>
</dbReference>
<dbReference type="GO" id="GO:0003723">
    <property type="term" value="F:RNA binding"/>
    <property type="evidence" value="ECO:0007669"/>
    <property type="project" value="UniProtKB-KW"/>
</dbReference>
<dbReference type="GO" id="GO:0051028">
    <property type="term" value="P:mRNA transport"/>
    <property type="evidence" value="ECO:0007669"/>
    <property type="project" value="UniProtKB-KW"/>
</dbReference>
<organism>
    <name type="scientific">Human T-cell leukemia virus 2</name>
    <name type="common">HTLV-2</name>
    <dbReference type="NCBI Taxonomy" id="11909"/>
    <lineage>
        <taxon>Viruses</taxon>
        <taxon>Riboviria</taxon>
        <taxon>Pararnavirae</taxon>
        <taxon>Artverviricota</taxon>
        <taxon>Revtraviricetes</taxon>
        <taxon>Ortervirales</taxon>
        <taxon>Retroviridae</taxon>
        <taxon>Orthoretrovirinae</taxon>
        <taxon>Deltaretrovirus</taxon>
        <taxon>Primate T-lymphotropic virus 2</taxon>
    </lineage>
</organism>
<reference key="1">
    <citation type="journal article" date="1985" name="Proc. Natl. Acad. Sci. U.S.A.">
        <title>Complete nucleotide sequence of an infectious clone of human T-cell leukemia virus type II: an open reading frame for the protease gene.</title>
        <authorList>
            <person name="Shimotohno K."/>
            <person name="Takahashi Y."/>
            <person name="Shimizu N."/>
            <person name="Gojobori T."/>
            <person name="Golde D.W."/>
            <person name="Chen I.S.Y."/>
            <person name="Miwa M."/>
            <person name="Sugimura T."/>
        </authorList>
    </citation>
    <scope>NUCLEOTIDE SEQUENCE [GENOMIC DNA]</scope>
</reference>
<reference key="2">
    <citation type="submission" date="2001-08" db="EMBL/GenBank/DDBJ databases">
        <authorList>
            <person name="Glaser J.B."/>
            <person name="Dube S."/>
            <person name="Poiesz B.J."/>
        </authorList>
    </citation>
    <scope>NUCLEOTIDE SEQUENCE [GENOMIC DNA]</scope>
</reference>
<reference key="3">
    <citation type="journal article" date="1991" name="J. Virol.">
        <title>Human T-cell leukemia virus (HTLV) type II Rex protein binds specifically to RNA sequences of the HTLV long terminal repeat but poorly to the human immunodeficiency virus type 1 Rev-responsive element.</title>
        <authorList>
            <person name="Yip M.T."/>
            <person name="Dynan W.S."/>
            <person name="Green P.L."/>
            <person name="Black A.C."/>
            <person name="Arrigo S.J."/>
            <person name="Torbati A."/>
            <person name="Heaphy S."/>
            <person name="Ruland C."/>
            <person name="Rosenblatt J.D."/>
            <person name="Chen I.S.Y."/>
        </authorList>
    </citation>
    <scope>RNA-BINDING</scope>
</reference>
<reference key="4">
    <citation type="journal article" date="1999" name="J. Virol.">
        <title>Human T-cell leukemia virus type 2 Rex protein increases stability and promotes nuclear to cytoplasmic transport of gag/pol and env RNAs.</title>
        <authorList>
            <person name="Kusuhara K."/>
            <person name="Anderson M."/>
            <person name="Pettiford S.M."/>
            <person name="Green P.L."/>
        </authorList>
    </citation>
    <scope>FUNCTION</scope>
</reference>
<reference key="5">
    <citation type="journal article" date="2001" name="J. Virol.">
        <title>Phosphorylation of two serine residues regulates human T-cell leukemia virus type 2 Rex function.</title>
        <authorList>
            <person name="Narayan M."/>
            <person name="Kusuhara K."/>
            <person name="Green P.L."/>
        </authorList>
    </citation>
    <scope>PHOSPHORYLATION AT SER-151 AND SER-153</scope>
    <scope>MUTAGENESIS OF THR-4; THR-9; THR-19; SER-24; SER-31; THR-35; SER-37; SER-51; SER-65; SER-71; THR-72; SER-74; THR-77; SER-79; SER-84; 88-SER--THR-90; SER-92; SER-95; SER-98; SER-107; SER-109; SER-117; SER-125; SER-131; THR-132; THR-135; 144-SER--SER-148; 151-SER--SER-153; SER-158; THR-162; SER-163 AND THR-164</scope>
</reference>
<reference key="6">
    <citation type="journal article" date="2003" name="J. Virol.">
        <title>Functional domain structure of human T-cell leukemia virus type 2 rex.</title>
        <authorList>
            <person name="Narayan M."/>
            <person name="Younis I."/>
            <person name="D'Agostino D.M."/>
            <person name="Green P.L."/>
        </authorList>
    </citation>
    <scope>DOMAIN</scope>
    <scope>MUTAGENESIS OF THR-4; THR-9; SER-65; SER-71; SER-92; SER-95; SER-125; SER-131; THR-132; 144-SER--SER-148; 151-SER--SER-153; SER-158; THR-162; SER-163 AND THR-164</scope>
</reference>
<reference key="7">
    <citation type="journal article" date="2005" name="Front. Biosci.">
        <title>The human T-cell leukemia virus Rex protein.</title>
        <authorList>
            <person name="Younis I."/>
            <person name="Green P.L."/>
        </authorList>
    </citation>
    <scope>REVIEW</scope>
</reference>
<proteinExistence type="evidence at protein level"/>
<keyword id="KW-1035">Host cytoplasm</keyword>
<keyword id="KW-1048">Host nucleus</keyword>
<keyword id="KW-0509">mRNA transport</keyword>
<keyword id="KW-0597">Phosphoprotein</keyword>
<keyword id="KW-1185">Reference proteome</keyword>
<keyword id="KW-0694">RNA-binding</keyword>
<keyword id="KW-0813">Transport</keyword>
<comment type="function">
    <text evidence="1 3">Rex escorts unspliced gag-pro-pol and singly spliced env mRNAs out of the nucleus of infected cells. These mRNAs carry a recognition sequence called Rex responsive element (RxRE or XRE) located at the 3' region of the long terminal repeat (LTR). This function is essential since most HTLV proteins are translated from unspliced or partially spliced pre-mRNAs that cannot exit the nucleus by the pathway used by fully processed cellular mRNAs (By similarity).</text>
</comment>
<comment type="subunit">
    <text evidence="1">Homomultimer.</text>
</comment>
<comment type="interaction">
    <interactant intactId="EBI-9676175">
        <id>Q85601</id>
    </interactant>
    <interactant intactId="EBI-742371">
        <id>Q96FJ2</id>
        <label>DYNLL2</label>
    </interactant>
    <organismsDiffer>true</organismsDiffer>
    <experiments>3</experiments>
</comment>
<comment type="interaction">
    <interactant intactId="EBI-9676175">
        <id>Q85601</id>
    </interactant>
    <interactant intactId="EBI-2340947">
        <id>Q8N448</id>
        <label>LNX2</label>
    </interactant>
    <organismsDiffer>true</organismsDiffer>
    <experiments>4</experiments>
</comment>
<comment type="interaction">
    <interactant intactId="EBI-9676175">
        <id>Q85601</id>
    </interactant>
    <interactant intactId="EBI-740897">
        <id>Q9GZT8</id>
        <label>NIF3L1</label>
    </interactant>
    <organismsDiffer>true</organismsDiffer>
    <experiments>3</experiments>
</comment>
<comment type="subcellular location">
    <subcellularLocation>
        <location evidence="1">Host nucleus</location>
        <location evidence="1">Host nucleolus</location>
    </subcellularLocation>
    <subcellularLocation>
        <location evidence="1">Host cytoplasm</location>
    </subcellularLocation>
    <text evidence="1">The presence of both nuclear import (NLS) and nuclear export (NES) signals leads to continuous shuttling between the nucleus and cytoplasm.</text>
</comment>
<comment type="domain">
    <text evidence="1">The RNA-binding motif binds to the RxRE, a complex secondary structure consisting of four stem loops and a long stretch of stem structure, present in incompletely spliced viral pre-mRNAs. This region also contains the NLS which mediates nuclear localization. These overlapping functions prevent Rex bound to RxRE from undesirable return to the nucleus. When Rex binds the RxRE, the NLS becomes masked while the NES remains accessible (By similarity).</text>
</comment>
<comment type="PTM">
    <text evidence="4">Phosphorylation is essential for RNA-binding and function.</text>
</comment>
<comment type="similarity">
    <text evidence="6">Belongs to the deltaretrovirus Rex protein family.</text>
</comment>
<accession>Q85601</accession>
<name>REX_HTLV2</name>
<feature type="chain" id="PRO_0000259786" description="Protein Rex">
    <location>
        <begin position="1"/>
        <end position="170"/>
    </location>
</feature>
<feature type="region of interest" description="Disordered" evidence="2">
    <location>
        <begin position="1"/>
        <end position="27"/>
    </location>
</feature>
<feature type="region of interest" description="Homomultimerization">
    <location>
        <begin position="57"/>
        <end position="71"/>
    </location>
</feature>
<feature type="region of interest" description="Disordered" evidence="2">
    <location>
        <begin position="69"/>
        <end position="170"/>
    </location>
</feature>
<feature type="region of interest" description="Homomultimerization">
    <location>
        <begin position="124"/>
        <end position="132"/>
    </location>
</feature>
<feature type="short sequence motif" description="Nuclear localization signal, and RNA-binding (RxRE)" evidence="1">
    <location>
        <begin position="2"/>
        <end position="19"/>
    </location>
</feature>
<feature type="short sequence motif" description="Nuclear export signal" evidence="1">
    <location>
        <begin position="83"/>
        <end position="94"/>
    </location>
</feature>
<feature type="compositionally biased region" description="Basic residues" evidence="2">
    <location>
        <begin position="1"/>
        <end position="16"/>
    </location>
</feature>
<feature type="compositionally biased region" description="Low complexity" evidence="2">
    <location>
        <begin position="82"/>
        <end position="95"/>
    </location>
</feature>
<feature type="compositionally biased region" description="Low complexity" evidence="2">
    <location>
        <begin position="143"/>
        <end position="160"/>
    </location>
</feature>
<feature type="compositionally biased region" description="Polar residues" evidence="2">
    <location>
        <begin position="161"/>
        <end position="170"/>
    </location>
</feature>
<feature type="modified residue" description="Phosphoserine; by host" evidence="4">
    <location>
        <position position="151"/>
    </location>
</feature>
<feature type="modified residue" description="Phosphoserine; by host" evidence="4">
    <location>
        <position position="153"/>
    </location>
</feature>
<feature type="mutagenesis site" description="50% loss of function, no effect on Rex's phosphorylation and RNA-binding; when associated with A-9." evidence="4 5">
    <original>T</original>
    <variation>A</variation>
    <location>
        <position position="4"/>
    </location>
</feature>
<feature type="mutagenesis site" description="50% loss of function, no effect on Rex's phosphorylation and RNA-binding; when associated with A-4." evidence="4 5">
    <original>T</original>
    <variation>A</variation>
    <location>
        <position position="9"/>
    </location>
</feature>
<feature type="mutagenesis site" description="No effect on function." evidence="4">
    <original>T</original>
    <variation>A</variation>
    <location>
        <position position="19"/>
    </location>
</feature>
<feature type="mutagenesis site" description="No effect on function." evidence="4">
    <original>S</original>
    <variation>A</variation>
    <location>
        <position position="24"/>
    </location>
</feature>
<feature type="mutagenesis site" description="No effect on function." evidence="4">
    <original>S</original>
    <variation>A</variation>
    <location>
        <position position="31"/>
    </location>
</feature>
<feature type="mutagenesis site" description="No effect on function." evidence="4">
    <original>T</original>
    <variation>A</variation>
    <location>
        <position position="35"/>
    </location>
</feature>
<feature type="mutagenesis site" description="No effect on function." evidence="4">
    <original>S</original>
    <variation>A</variation>
    <location>
        <position position="37"/>
    </location>
</feature>
<feature type="mutagenesis site" description="No effect on function." evidence="4">
    <original>S</original>
    <variation>A</variation>
    <location>
        <position position="51"/>
    </location>
</feature>
<feature type="mutagenesis site" description="80% loss of function, no effect on Rex's phosphorylation and RNA-binding; when associated with A-71." evidence="4 5">
    <original>S</original>
    <variation>A</variation>
    <location>
        <position position="65"/>
    </location>
</feature>
<feature type="mutagenesis site" description="80% loss of function, no effect on Rex's phosphorylation and RNA-binding; when associated with A-65." evidence="4 5">
    <original>S</original>
    <variation>A</variation>
    <location>
        <position position="71"/>
    </location>
</feature>
<feature type="mutagenesis site" description="No effect on function." evidence="4">
    <original>T</original>
    <variation>A</variation>
    <location>
        <position position="72"/>
    </location>
</feature>
<feature type="mutagenesis site" description="No effect on function." evidence="4">
    <original>S</original>
    <variation>A</variation>
    <location>
        <position position="74"/>
    </location>
</feature>
<feature type="mutagenesis site" description="No effect on function." evidence="4">
    <original>T</original>
    <variation>A</variation>
    <location>
        <position position="77"/>
    </location>
</feature>
<feature type="mutagenesis site" description="No effect on function." evidence="4">
    <original>S</original>
    <variation>A</variation>
    <location>
        <position position="79"/>
    </location>
</feature>
<feature type="mutagenesis site" description="No effect on function." evidence="4">
    <original>S</original>
    <variation>A</variation>
    <location>
        <position position="84"/>
    </location>
</feature>
<feature type="mutagenesis site" description="Almost complete loss of function, no effect on Rex's phosphorylation." evidence="4">
    <original>SNT</original>
    <variation>ANA</variation>
    <location>
        <begin position="88"/>
        <end position="90"/>
    </location>
</feature>
<feature type="mutagenesis site" description="Almost complete loss of function, no effect on Rex's phosphorylation and RNA-binding; when associated with A-95." evidence="4 5">
    <original>S</original>
    <variation>A</variation>
    <location>
        <position position="92"/>
    </location>
</feature>
<feature type="mutagenesis site" description="Almost complete loss of function, no effect on Rex's phosphorylation and RNA-binding; when associated with A-92." evidence="4 5">
    <original>S</original>
    <variation>A</variation>
    <location>
        <position position="95"/>
    </location>
</feature>
<feature type="mutagenesis site" description="No effect on function." evidence="4">
    <original>S</original>
    <variation>A</variation>
    <location>
        <position position="98"/>
    </location>
</feature>
<feature type="mutagenesis site" description="No effect on function." evidence="4">
    <original>S</original>
    <variation>A</variation>
    <location>
        <position position="107"/>
    </location>
</feature>
<feature type="mutagenesis site" description="No effect on function." evidence="4">
    <original>S</original>
    <variation>A</variation>
    <location>
        <position position="109"/>
    </location>
</feature>
<feature type="mutagenesis site" description="No effect on function." evidence="4">
    <original>S</original>
    <variation>A</variation>
    <location>
        <position position="117"/>
    </location>
</feature>
<feature type="mutagenesis site" description="70% loss of function, no effect on Rex's phosphorylation and RNA-binding; when associated with A-131 and A-132." evidence="4 5">
    <original>S</original>
    <variation>A</variation>
    <location>
        <position position="125"/>
    </location>
</feature>
<feature type="mutagenesis site" description="70% loss of function, no effect on Rex's phosphorylation and RNA-binding; when associated with A-125 and A-132." evidence="4 5">
    <original>S</original>
    <variation>A</variation>
    <location>
        <position position="131"/>
    </location>
</feature>
<feature type="mutagenesis site" description="70% loss of function, no effect on Rex's phosphorylation and RNA-binding; when associated with A-125 and A-131." evidence="4 5">
    <original>T</original>
    <variation>A</variation>
    <location>
        <position position="132"/>
    </location>
</feature>
<feature type="mutagenesis site" description="No effect on function." evidence="4">
    <original>T</original>
    <variation>A</variation>
    <location>
        <position position="135"/>
    </location>
</feature>
<feature type="mutagenesis site" description="No effect on function and RNA-binding." evidence="4 5">
    <original>SGISS</original>
    <variation>AGIAA</variation>
    <location>
        <begin position="144"/>
        <end position="148"/>
    </location>
</feature>
<feature type="mutagenesis site" description="Loss of Rex's phosphorylation, function and RNA-binding." evidence="4 5">
    <original>SPS</original>
    <variation>APA</variation>
    <location>
        <begin position="151"/>
        <end position="153"/>
    </location>
</feature>
<feature type="mutagenesis site" description="Increase in Rex's function and RNA-binding." evidence="4 5">
    <original>SPS</original>
    <variation>DPD</variation>
    <location>
        <begin position="151"/>
        <end position="153"/>
    </location>
</feature>
<feature type="mutagenesis site" description="No effect on function." evidence="4 5">
    <original>SPS</original>
    <variation>TPT</variation>
    <location>
        <begin position="151"/>
        <end position="153"/>
    </location>
</feature>
<feature type="mutagenesis site" description="No effect on function." evidence="4 5">
    <original>S</original>
    <variation>A</variation>
    <location>
        <position position="158"/>
    </location>
</feature>
<feature type="mutagenesis site" description="No effect on function." evidence="4 5">
    <original>T</original>
    <variation>A</variation>
    <location>
        <position position="162"/>
    </location>
</feature>
<feature type="mutagenesis site" description="No effect on function." evidence="4 5">
    <original>S</original>
    <variation>A</variation>
    <location>
        <position position="163"/>
    </location>
</feature>
<feature type="mutagenesis site" description="No effect on function." evidence="4 5">
    <original>T</original>
    <variation>A</variation>
    <location>
        <position position="164"/>
    </location>
</feature>
<sequence>MPKTRRQRTRRARRNRPPTPWPISQDLDRASYMDTPSTCLAIVYRPIGVPSQVVYVPPAYIDMPSWPPVQSTNSPGTPSMDALSALLSNTLSLASPPSPPREPQGPSRSLPLPPLLSPPRFHLPSFNQCESTPPTEMDAWNQPSGISSPPSPSPNLASVPKTSTPPGEKP</sequence>
<protein>
    <recommendedName>
        <fullName>Protein Rex</fullName>
    </recommendedName>
    <alternativeName>
        <fullName>Rev homolog</fullName>
    </alternativeName>
    <alternativeName>
        <fullName>Rex-2</fullName>
    </alternativeName>
</protein>
<evidence type="ECO:0000250" key="1"/>
<evidence type="ECO:0000256" key="2">
    <source>
        <dbReference type="SAM" id="MobiDB-lite"/>
    </source>
</evidence>
<evidence type="ECO:0000269" key="3">
    <source>
    </source>
</evidence>
<evidence type="ECO:0000269" key="4">
    <source>
    </source>
</evidence>
<evidence type="ECO:0000269" key="5">
    <source>
    </source>
</evidence>
<evidence type="ECO:0000305" key="6"/>
<organismHost>
    <name type="scientific">Homo sapiens</name>
    <name type="common">Human</name>
    <dbReference type="NCBI Taxonomy" id="9606"/>
</organismHost>